<accession>A1V3N4</accession>
<sequence length="975" mass="104751">MASNNVAQFAAELKMPAGVLLEQLQAAGVQKASEDDALSETDKARLLDHLRKSHGATDGDKRKITLTRRHTSEIKQADATGKARTIQVEVRKKRTFVKRDDVSETGADQAQAQTDEQAEAELKRREEEARREAELLEKQAQELRERQERLEREEAERRAREEAAEAERRRAEEEAAAKRAAAAQAEAAQQAAAAREQAQRAQSEPAEQSAQDEARAAAERAAQREAAKKAEDAAREAADKARAEQEEIRKRREAAEAEARAIREMMNTPRRAQVKAVEPPKPAEPPAAKAAEAKGTLHKPAKPAGEAAAARPAAKKPASGAPAPAAAPAGDRTKKPGTGKSGWQDDAAKRRGIKTRGDSSGGVDRGWRGGPKGRGKHQDSASSFQAPTEPIVREVHVPETISVADLAHKMSIKASEVIKVMMKMGQMVTINQVLDQETAMIVVEELGHRALAAKLDDPEALLVEGEIGSDAEQLPRPPVVTVMGHVDHGKTSLLDYIRRAKVAAGEAGGITQHIGAYHVETPRGVVTFLDTPGHEAFTAMRARGAKATDIVILVVAADDGVMPQTKEAISHAKAGGVPIVVAINKIDKPEANPDRVKQELVAEGVVPEEYGGDSPFVPVSAKTGAGIDDLLENVLLQAEVLELKAPVESPAKGIVIEAKLDKGKGPVATVLVQSGTLSRGDVVLAGTAYGRVRAMLDENGKPTKEAGPSIPVEIQGLSEVPGAGDEVIVLPDERKAREIALFRQGKFRDVKLAKQQAAKLESMLEQMGEGEVQNLPLIIKADVQGSQEALVQSLLKLSTDEVRVQIVHSAVGGISESDVNLATASKAVIIGFNTRADAQARKLAEANGIDIRYYNIIYDAVDEVKAAMSGMLAPEKREVVTGMVEVRQVFKVPKVGTVAGCMVTDGVVKRSSSVRVLRNNVVIFTGELDSLKRFKDDVKEVKQGFECGMSLKNFNDIVEGDQFEVFEVTEVARTL</sequence>
<feature type="chain" id="PRO_1000008213" description="Translation initiation factor IF-2">
    <location>
        <begin position="1"/>
        <end position="975"/>
    </location>
</feature>
<feature type="domain" description="tr-type G">
    <location>
        <begin position="475"/>
        <end position="644"/>
    </location>
</feature>
<feature type="region of interest" description="Disordered" evidence="3">
    <location>
        <begin position="48"/>
        <end position="84"/>
    </location>
</feature>
<feature type="region of interest" description="Disordered" evidence="3">
    <location>
        <begin position="98"/>
        <end position="388"/>
    </location>
</feature>
<feature type="region of interest" description="G1" evidence="1">
    <location>
        <begin position="484"/>
        <end position="491"/>
    </location>
</feature>
<feature type="region of interest" description="G2" evidence="1">
    <location>
        <begin position="509"/>
        <end position="513"/>
    </location>
</feature>
<feature type="region of interest" description="G3" evidence="1">
    <location>
        <begin position="530"/>
        <end position="533"/>
    </location>
</feature>
<feature type="region of interest" description="G4" evidence="1">
    <location>
        <begin position="584"/>
        <end position="587"/>
    </location>
</feature>
<feature type="region of interest" description="G5" evidence="1">
    <location>
        <begin position="620"/>
        <end position="622"/>
    </location>
</feature>
<feature type="compositionally biased region" description="Basic and acidic residues" evidence="3">
    <location>
        <begin position="48"/>
        <end position="63"/>
    </location>
</feature>
<feature type="compositionally biased region" description="Low complexity" evidence="3">
    <location>
        <begin position="104"/>
        <end position="115"/>
    </location>
</feature>
<feature type="compositionally biased region" description="Basic and acidic residues" evidence="3">
    <location>
        <begin position="120"/>
        <end position="177"/>
    </location>
</feature>
<feature type="compositionally biased region" description="Low complexity" evidence="3">
    <location>
        <begin position="178"/>
        <end position="211"/>
    </location>
</feature>
<feature type="compositionally biased region" description="Basic and acidic residues" evidence="3">
    <location>
        <begin position="212"/>
        <end position="263"/>
    </location>
</feature>
<feature type="compositionally biased region" description="Low complexity" evidence="3">
    <location>
        <begin position="302"/>
        <end position="330"/>
    </location>
</feature>
<feature type="compositionally biased region" description="Gly residues" evidence="3">
    <location>
        <begin position="359"/>
        <end position="372"/>
    </location>
</feature>
<feature type="binding site" evidence="2">
    <location>
        <begin position="484"/>
        <end position="491"/>
    </location>
    <ligand>
        <name>GTP</name>
        <dbReference type="ChEBI" id="CHEBI:37565"/>
    </ligand>
</feature>
<feature type="binding site" evidence="2">
    <location>
        <begin position="530"/>
        <end position="534"/>
    </location>
    <ligand>
        <name>GTP</name>
        <dbReference type="ChEBI" id="CHEBI:37565"/>
    </ligand>
</feature>
<feature type="binding site" evidence="2">
    <location>
        <begin position="584"/>
        <end position="587"/>
    </location>
    <ligand>
        <name>GTP</name>
        <dbReference type="ChEBI" id="CHEBI:37565"/>
    </ligand>
</feature>
<name>IF2_BURMS</name>
<reference key="1">
    <citation type="journal article" date="2010" name="Genome Biol. Evol.">
        <title>Continuing evolution of Burkholderia mallei through genome reduction and large-scale rearrangements.</title>
        <authorList>
            <person name="Losada L."/>
            <person name="Ronning C.M."/>
            <person name="DeShazer D."/>
            <person name="Woods D."/>
            <person name="Fedorova N."/>
            <person name="Kim H.S."/>
            <person name="Shabalina S.A."/>
            <person name="Pearson T.R."/>
            <person name="Brinkac L."/>
            <person name="Tan P."/>
            <person name="Nandi T."/>
            <person name="Crabtree J."/>
            <person name="Badger J."/>
            <person name="Beckstrom-Sternberg S."/>
            <person name="Saqib M."/>
            <person name="Schutzer S.E."/>
            <person name="Keim P."/>
            <person name="Nierman W.C."/>
        </authorList>
    </citation>
    <scope>NUCLEOTIDE SEQUENCE [LARGE SCALE GENOMIC DNA]</scope>
    <source>
        <strain>SAVP1</strain>
    </source>
</reference>
<organism>
    <name type="scientific">Burkholderia mallei (strain SAVP1)</name>
    <dbReference type="NCBI Taxonomy" id="320388"/>
    <lineage>
        <taxon>Bacteria</taxon>
        <taxon>Pseudomonadati</taxon>
        <taxon>Pseudomonadota</taxon>
        <taxon>Betaproteobacteria</taxon>
        <taxon>Burkholderiales</taxon>
        <taxon>Burkholderiaceae</taxon>
        <taxon>Burkholderia</taxon>
        <taxon>pseudomallei group</taxon>
    </lineage>
</organism>
<evidence type="ECO:0000250" key="1"/>
<evidence type="ECO:0000255" key="2">
    <source>
        <dbReference type="HAMAP-Rule" id="MF_00100"/>
    </source>
</evidence>
<evidence type="ECO:0000256" key="3">
    <source>
        <dbReference type="SAM" id="MobiDB-lite"/>
    </source>
</evidence>
<keyword id="KW-0963">Cytoplasm</keyword>
<keyword id="KW-0342">GTP-binding</keyword>
<keyword id="KW-0396">Initiation factor</keyword>
<keyword id="KW-0547">Nucleotide-binding</keyword>
<keyword id="KW-0648">Protein biosynthesis</keyword>
<gene>
    <name evidence="2" type="primary">infB</name>
    <name type="ordered locus">BMASAVP1_A1507</name>
</gene>
<protein>
    <recommendedName>
        <fullName evidence="2">Translation initiation factor IF-2</fullName>
    </recommendedName>
</protein>
<proteinExistence type="inferred from homology"/>
<dbReference type="EMBL" id="CP000526">
    <property type="protein sequence ID" value="ABM50690.1"/>
    <property type="molecule type" value="Genomic_DNA"/>
</dbReference>
<dbReference type="RefSeq" id="WP_004197388.1">
    <property type="nucleotide sequence ID" value="NC_008785.1"/>
</dbReference>
<dbReference type="SMR" id="A1V3N4"/>
<dbReference type="GeneID" id="92978809"/>
<dbReference type="KEGG" id="bmv:BMASAVP1_A1507"/>
<dbReference type="HOGENOM" id="CLU_006301_6_0_4"/>
<dbReference type="GO" id="GO:0005829">
    <property type="term" value="C:cytosol"/>
    <property type="evidence" value="ECO:0007669"/>
    <property type="project" value="TreeGrafter"/>
</dbReference>
<dbReference type="GO" id="GO:0005525">
    <property type="term" value="F:GTP binding"/>
    <property type="evidence" value="ECO:0007669"/>
    <property type="project" value="UniProtKB-KW"/>
</dbReference>
<dbReference type="GO" id="GO:0003924">
    <property type="term" value="F:GTPase activity"/>
    <property type="evidence" value="ECO:0007669"/>
    <property type="project" value="UniProtKB-UniRule"/>
</dbReference>
<dbReference type="GO" id="GO:0097216">
    <property type="term" value="F:guanosine tetraphosphate binding"/>
    <property type="evidence" value="ECO:0007669"/>
    <property type="project" value="UniProtKB-ARBA"/>
</dbReference>
<dbReference type="GO" id="GO:0003743">
    <property type="term" value="F:translation initiation factor activity"/>
    <property type="evidence" value="ECO:0007669"/>
    <property type="project" value="UniProtKB-UniRule"/>
</dbReference>
<dbReference type="CDD" id="cd01887">
    <property type="entry name" value="IF2_eIF5B"/>
    <property type="match status" value="1"/>
</dbReference>
<dbReference type="CDD" id="cd03702">
    <property type="entry name" value="IF2_mtIF2_II"/>
    <property type="match status" value="1"/>
</dbReference>
<dbReference type="CDD" id="cd03692">
    <property type="entry name" value="mtIF2_IVc"/>
    <property type="match status" value="1"/>
</dbReference>
<dbReference type="FunFam" id="2.40.30.10:FF:000007">
    <property type="entry name" value="Translation initiation factor IF-2"/>
    <property type="match status" value="1"/>
</dbReference>
<dbReference type="FunFam" id="2.40.30.10:FF:000008">
    <property type="entry name" value="Translation initiation factor IF-2"/>
    <property type="match status" value="1"/>
</dbReference>
<dbReference type="FunFam" id="3.40.50.10050:FF:000001">
    <property type="entry name" value="Translation initiation factor IF-2"/>
    <property type="match status" value="1"/>
</dbReference>
<dbReference type="FunFam" id="3.40.50.300:FF:000019">
    <property type="entry name" value="Translation initiation factor IF-2"/>
    <property type="match status" value="1"/>
</dbReference>
<dbReference type="Gene3D" id="3.40.50.300">
    <property type="entry name" value="P-loop containing nucleotide triphosphate hydrolases"/>
    <property type="match status" value="1"/>
</dbReference>
<dbReference type="Gene3D" id="3.30.56.50">
    <property type="entry name" value="Putative DNA-binding domain, N-terminal subdomain of bacterial translation initiation factor IF2"/>
    <property type="match status" value="1"/>
</dbReference>
<dbReference type="Gene3D" id="2.40.30.10">
    <property type="entry name" value="Translation factors"/>
    <property type="match status" value="2"/>
</dbReference>
<dbReference type="Gene3D" id="3.40.50.10050">
    <property type="entry name" value="Translation initiation factor IF- 2, domain 3"/>
    <property type="match status" value="1"/>
</dbReference>
<dbReference type="HAMAP" id="MF_00100_B">
    <property type="entry name" value="IF_2_B"/>
    <property type="match status" value="1"/>
</dbReference>
<dbReference type="InterPro" id="IPR009061">
    <property type="entry name" value="DNA-bd_dom_put_sf"/>
</dbReference>
<dbReference type="InterPro" id="IPR053905">
    <property type="entry name" value="EF-G-like_DII"/>
</dbReference>
<dbReference type="InterPro" id="IPR004161">
    <property type="entry name" value="EFTu-like_2"/>
</dbReference>
<dbReference type="InterPro" id="IPR013575">
    <property type="entry name" value="IF2_assoc_dom_bac"/>
</dbReference>
<dbReference type="InterPro" id="IPR044145">
    <property type="entry name" value="IF2_II"/>
</dbReference>
<dbReference type="InterPro" id="IPR006847">
    <property type="entry name" value="IF2_N"/>
</dbReference>
<dbReference type="InterPro" id="IPR027417">
    <property type="entry name" value="P-loop_NTPase"/>
</dbReference>
<dbReference type="InterPro" id="IPR005225">
    <property type="entry name" value="Small_GTP-bd"/>
</dbReference>
<dbReference type="InterPro" id="IPR000795">
    <property type="entry name" value="T_Tr_GTP-bd_dom"/>
</dbReference>
<dbReference type="InterPro" id="IPR000178">
    <property type="entry name" value="TF_IF2_bacterial-like"/>
</dbReference>
<dbReference type="InterPro" id="IPR015760">
    <property type="entry name" value="TIF_IF2"/>
</dbReference>
<dbReference type="InterPro" id="IPR023115">
    <property type="entry name" value="TIF_IF2_dom3"/>
</dbReference>
<dbReference type="InterPro" id="IPR036925">
    <property type="entry name" value="TIF_IF2_dom3_sf"/>
</dbReference>
<dbReference type="InterPro" id="IPR009000">
    <property type="entry name" value="Transl_B-barrel_sf"/>
</dbReference>
<dbReference type="NCBIfam" id="TIGR00487">
    <property type="entry name" value="IF-2"/>
    <property type="match status" value="1"/>
</dbReference>
<dbReference type="NCBIfam" id="TIGR00231">
    <property type="entry name" value="small_GTP"/>
    <property type="match status" value="1"/>
</dbReference>
<dbReference type="PANTHER" id="PTHR43381:SF5">
    <property type="entry name" value="TR-TYPE G DOMAIN-CONTAINING PROTEIN"/>
    <property type="match status" value="1"/>
</dbReference>
<dbReference type="PANTHER" id="PTHR43381">
    <property type="entry name" value="TRANSLATION INITIATION FACTOR IF-2-RELATED"/>
    <property type="match status" value="1"/>
</dbReference>
<dbReference type="Pfam" id="PF22042">
    <property type="entry name" value="EF-G_D2"/>
    <property type="match status" value="1"/>
</dbReference>
<dbReference type="Pfam" id="PF00009">
    <property type="entry name" value="GTP_EFTU"/>
    <property type="match status" value="1"/>
</dbReference>
<dbReference type="Pfam" id="PF03144">
    <property type="entry name" value="GTP_EFTU_D2"/>
    <property type="match status" value="1"/>
</dbReference>
<dbReference type="Pfam" id="PF11987">
    <property type="entry name" value="IF-2"/>
    <property type="match status" value="1"/>
</dbReference>
<dbReference type="Pfam" id="PF08364">
    <property type="entry name" value="IF2_assoc"/>
    <property type="match status" value="1"/>
</dbReference>
<dbReference type="Pfam" id="PF04760">
    <property type="entry name" value="IF2_N"/>
    <property type="match status" value="2"/>
</dbReference>
<dbReference type="SUPFAM" id="SSF52156">
    <property type="entry name" value="Initiation factor IF2/eIF5b, domain 3"/>
    <property type="match status" value="1"/>
</dbReference>
<dbReference type="SUPFAM" id="SSF52540">
    <property type="entry name" value="P-loop containing nucleoside triphosphate hydrolases"/>
    <property type="match status" value="1"/>
</dbReference>
<dbReference type="SUPFAM" id="SSF46955">
    <property type="entry name" value="Putative DNA-binding domain"/>
    <property type="match status" value="1"/>
</dbReference>
<dbReference type="SUPFAM" id="SSF50447">
    <property type="entry name" value="Translation proteins"/>
    <property type="match status" value="2"/>
</dbReference>
<dbReference type="PROSITE" id="PS51722">
    <property type="entry name" value="G_TR_2"/>
    <property type="match status" value="1"/>
</dbReference>
<dbReference type="PROSITE" id="PS01176">
    <property type="entry name" value="IF2"/>
    <property type="match status" value="1"/>
</dbReference>
<comment type="function">
    <text evidence="2">One of the essential components for the initiation of protein synthesis. Protects formylmethionyl-tRNA from spontaneous hydrolysis and promotes its binding to the 30S ribosomal subunits. Also involved in the hydrolysis of GTP during the formation of the 70S ribosomal complex.</text>
</comment>
<comment type="subcellular location">
    <subcellularLocation>
        <location evidence="2">Cytoplasm</location>
    </subcellularLocation>
</comment>
<comment type="similarity">
    <text evidence="2">Belongs to the TRAFAC class translation factor GTPase superfamily. Classic translation factor GTPase family. IF-2 subfamily.</text>
</comment>